<organism>
    <name type="scientific">Campylobacter jejuni (strain RM1221)</name>
    <dbReference type="NCBI Taxonomy" id="195099"/>
    <lineage>
        <taxon>Bacteria</taxon>
        <taxon>Pseudomonadati</taxon>
        <taxon>Campylobacterota</taxon>
        <taxon>Epsilonproteobacteria</taxon>
        <taxon>Campylobacterales</taxon>
        <taxon>Campylobacteraceae</taxon>
        <taxon>Campylobacter</taxon>
    </lineage>
</organism>
<protein>
    <recommendedName>
        <fullName evidence="1">Small ribosomal subunit protein bS21</fullName>
    </recommendedName>
    <alternativeName>
        <fullName evidence="2">30S ribosomal protein S21</fullName>
    </alternativeName>
</protein>
<sequence>MPGIKVHPNESFDEAYRKFKKQVDRNLVVTEVRARRFFEPMTEIRKKQKISARKKMLKRLYMLRRYESRL</sequence>
<evidence type="ECO:0000255" key="1">
    <source>
        <dbReference type="HAMAP-Rule" id="MF_00358"/>
    </source>
</evidence>
<evidence type="ECO:0000305" key="2"/>
<reference key="1">
    <citation type="journal article" date="2005" name="PLoS Biol.">
        <title>Major structural differences and novel potential virulence mechanisms from the genomes of multiple Campylobacter species.</title>
        <authorList>
            <person name="Fouts D.E."/>
            <person name="Mongodin E.F."/>
            <person name="Mandrell R.E."/>
            <person name="Miller W.G."/>
            <person name="Rasko D.A."/>
            <person name="Ravel J."/>
            <person name="Brinkac L.M."/>
            <person name="DeBoy R.T."/>
            <person name="Parker C.T."/>
            <person name="Daugherty S.C."/>
            <person name="Dodson R.J."/>
            <person name="Durkin A.S."/>
            <person name="Madupu R."/>
            <person name="Sullivan S.A."/>
            <person name="Shetty J.U."/>
            <person name="Ayodeji M.A."/>
            <person name="Shvartsbeyn A."/>
            <person name="Schatz M.C."/>
            <person name="Badger J.H."/>
            <person name="Fraser C.M."/>
            <person name="Nelson K.E."/>
        </authorList>
    </citation>
    <scope>NUCLEOTIDE SEQUENCE [LARGE SCALE GENOMIC DNA]</scope>
    <source>
        <strain>RM1221</strain>
    </source>
</reference>
<keyword id="KW-0687">Ribonucleoprotein</keyword>
<keyword id="KW-0689">Ribosomal protein</keyword>
<dbReference type="EMBL" id="CP000025">
    <property type="protein sequence ID" value="AAW35008.1"/>
    <property type="molecule type" value="Genomic_DNA"/>
</dbReference>
<dbReference type="RefSeq" id="WP_002780697.1">
    <property type="nucleotide sequence ID" value="NC_003912.7"/>
</dbReference>
<dbReference type="SMR" id="Q5HW97"/>
<dbReference type="GeneID" id="98394943"/>
<dbReference type="KEGG" id="cjr:CJE0419"/>
<dbReference type="HOGENOM" id="CLU_159258_1_1_7"/>
<dbReference type="GO" id="GO:1990904">
    <property type="term" value="C:ribonucleoprotein complex"/>
    <property type="evidence" value="ECO:0007669"/>
    <property type="project" value="UniProtKB-KW"/>
</dbReference>
<dbReference type="GO" id="GO:0005840">
    <property type="term" value="C:ribosome"/>
    <property type="evidence" value="ECO:0007669"/>
    <property type="project" value="UniProtKB-KW"/>
</dbReference>
<dbReference type="GO" id="GO:0003735">
    <property type="term" value="F:structural constituent of ribosome"/>
    <property type="evidence" value="ECO:0007669"/>
    <property type="project" value="InterPro"/>
</dbReference>
<dbReference type="GO" id="GO:0006412">
    <property type="term" value="P:translation"/>
    <property type="evidence" value="ECO:0007669"/>
    <property type="project" value="UniProtKB-UniRule"/>
</dbReference>
<dbReference type="Gene3D" id="1.20.5.1150">
    <property type="entry name" value="Ribosomal protein S8"/>
    <property type="match status" value="1"/>
</dbReference>
<dbReference type="HAMAP" id="MF_00358">
    <property type="entry name" value="Ribosomal_bS21"/>
    <property type="match status" value="1"/>
</dbReference>
<dbReference type="InterPro" id="IPR001911">
    <property type="entry name" value="Ribosomal_bS21"/>
</dbReference>
<dbReference type="InterPro" id="IPR038380">
    <property type="entry name" value="Ribosomal_bS21_sf"/>
</dbReference>
<dbReference type="NCBIfam" id="TIGR00030">
    <property type="entry name" value="S21p"/>
    <property type="match status" value="1"/>
</dbReference>
<dbReference type="Pfam" id="PF01165">
    <property type="entry name" value="Ribosomal_S21"/>
    <property type="match status" value="1"/>
</dbReference>
<dbReference type="PRINTS" id="PR00976">
    <property type="entry name" value="RIBOSOMALS21"/>
</dbReference>
<proteinExistence type="inferred from homology"/>
<gene>
    <name evidence="1" type="primary">rpsU</name>
    <name type="ordered locus">CJE0419</name>
</gene>
<name>RS21_CAMJR</name>
<feature type="chain" id="PRO_0000266649" description="Small ribosomal subunit protein bS21">
    <location>
        <begin position="1"/>
        <end position="70"/>
    </location>
</feature>
<comment type="similarity">
    <text evidence="1">Belongs to the bacterial ribosomal protein bS21 family.</text>
</comment>
<accession>Q5HW97</accession>